<dbReference type="EMBL" id="AE005174">
    <property type="protein sequence ID" value="AAG58757.1"/>
    <property type="molecule type" value="Genomic_DNA"/>
</dbReference>
<dbReference type="EMBL" id="BA000007">
    <property type="protein sequence ID" value="BAB37911.1"/>
    <property type="molecule type" value="Genomic_DNA"/>
</dbReference>
<dbReference type="PIR" id="A86037">
    <property type="entry name" value="A86037"/>
</dbReference>
<dbReference type="PIR" id="H91189">
    <property type="entry name" value="H91189"/>
</dbReference>
<dbReference type="RefSeq" id="NP_312515.1">
    <property type="nucleotide sequence ID" value="NC_002695.1"/>
</dbReference>
<dbReference type="RefSeq" id="WP_000024392.1">
    <property type="nucleotide sequence ID" value="NZ_VOAI01000021.1"/>
</dbReference>
<dbReference type="BMRB" id="P0AC64"/>
<dbReference type="SMR" id="P0AC64"/>
<dbReference type="STRING" id="155864.Z5037"/>
<dbReference type="GeneID" id="915569"/>
<dbReference type="GeneID" id="93778324"/>
<dbReference type="KEGG" id="ece:Z5037"/>
<dbReference type="KEGG" id="ecs:ECs_4488"/>
<dbReference type="PATRIC" id="fig|386585.9.peg.4703"/>
<dbReference type="eggNOG" id="COG0695">
    <property type="taxonomic scope" value="Bacteria"/>
</dbReference>
<dbReference type="HOGENOM" id="CLU_026126_7_3_6"/>
<dbReference type="OMA" id="IYTSPLC"/>
<dbReference type="Proteomes" id="UP000000558">
    <property type="component" value="Chromosome"/>
</dbReference>
<dbReference type="Proteomes" id="UP000002519">
    <property type="component" value="Chromosome"/>
</dbReference>
<dbReference type="GO" id="GO:0005737">
    <property type="term" value="C:cytoplasm"/>
    <property type="evidence" value="ECO:0007669"/>
    <property type="project" value="TreeGrafter"/>
</dbReference>
<dbReference type="GO" id="GO:0015038">
    <property type="term" value="F:glutathione disulfide oxidoreductase activity"/>
    <property type="evidence" value="ECO:0007669"/>
    <property type="project" value="TreeGrafter"/>
</dbReference>
<dbReference type="GO" id="GO:0045454">
    <property type="term" value="P:cell redox homeostasis"/>
    <property type="evidence" value="ECO:0007669"/>
    <property type="project" value="InterPro"/>
</dbReference>
<dbReference type="GO" id="GO:0034599">
    <property type="term" value="P:cellular response to oxidative stress"/>
    <property type="evidence" value="ECO:0007669"/>
    <property type="project" value="TreeGrafter"/>
</dbReference>
<dbReference type="GO" id="GO:0009263">
    <property type="term" value="P:deoxyribonucleotide biosynthetic process"/>
    <property type="evidence" value="ECO:0007669"/>
    <property type="project" value="UniProtKB-KW"/>
</dbReference>
<dbReference type="CDD" id="cd03418">
    <property type="entry name" value="GRX_GRXb_1_3_like"/>
    <property type="match status" value="1"/>
</dbReference>
<dbReference type="FunFam" id="3.40.30.10:FF:000018">
    <property type="entry name" value="Glutaredoxin"/>
    <property type="match status" value="1"/>
</dbReference>
<dbReference type="Gene3D" id="3.40.30.10">
    <property type="entry name" value="Glutaredoxin"/>
    <property type="match status" value="1"/>
</dbReference>
<dbReference type="InterPro" id="IPR011767">
    <property type="entry name" value="GLR_AS"/>
</dbReference>
<dbReference type="InterPro" id="IPR002109">
    <property type="entry name" value="Glutaredoxin"/>
</dbReference>
<dbReference type="InterPro" id="IPR014025">
    <property type="entry name" value="Glutaredoxin_subgr"/>
</dbReference>
<dbReference type="InterPro" id="IPR011900">
    <property type="entry name" value="GRX_bact"/>
</dbReference>
<dbReference type="InterPro" id="IPR036249">
    <property type="entry name" value="Thioredoxin-like_sf"/>
</dbReference>
<dbReference type="NCBIfam" id="TIGR02181">
    <property type="entry name" value="GRX_bact"/>
    <property type="match status" value="1"/>
</dbReference>
<dbReference type="NCBIfam" id="NF007923">
    <property type="entry name" value="PRK10638.1"/>
    <property type="match status" value="1"/>
</dbReference>
<dbReference type="PANTHER" id="PTHR45694">
    <property type="entry name" value="GLUTAREDOXIN 2"/>
    <property type="match status" value="1"/>
</dbReference>
<dbReference type="PANTHER" id="PTHR45694:SF18">
    <property type="entry name" value="GLUTAREDOXIN-1-RELATED"/>
    <property type="match status" value="1"/>
</dbReference>
<dbReference type="Pfam" id="PF00462">
    <property type="entry name" value="Glutaredoxin"/>
    <property type="match status" value="1"/>
</dbReference>
<dbReference type="PRINTS" id="PR00160">
    <property type="entry name" value="GLUTAREDOXIN"/>
</dbReference>
<dbReference type="SUPFAM" id="SSF52833">
    <property type="entry name" value="Thioredoxin-like"/>
    <property type="match status" value="1"/>
</dbReference>
<dbReference type="PROSITE" id="PS00195">
    <property type="entry name" value="GLUTAREDOXIN_1"/>
    <property type="match status" value="1"/>
</dbReference>
<dbReference type="PROSITE" id="PS51354">
    <property type="entry name" value="GLUTAREDOXIN_2"/>
    <property type="match status" value="1"/>
</dbReference>
<accession>P0AC64</accession>
<accession>P37687</accession>
<organism>
    <name type="scientific">Escherichia coli O157:H7</name>
    <dbReference type="NCBI Taxonomy" id="83334"/>
    <lineage>
        <taxon>Bacteria</taxon>
        <taxon>Pseudomonadati</taxon>
        <taxon>Pseudomonadota</taxon>
        <taxon>Gammaproteobacteria</taxon>
        <taxon>Enterobacterales</taxon>
        <taxon>Enterobacteriaceae</taxon>
        <taxon>Escherichia</taxon>
    </lineage>
</organism>
<protein>
    <recommendedName>
        <fullName>Glutaredoxin 3</fullName>
        <shortName>Grx3</shortName>
    </recommendedName>
</protein>
<comment type="function">
    <text evidence="1">The disulfide bond functions as an electron carrier in the glutathione-dependent synthesis of deoxyribonucleotides by the enzyme ribonucleotide reductase. In addition, it is also involved in reducing some disulfides in a coupled system with glutathione reductase (By similarity).</text>
</comment>
<comment type="subunit">
    <text evidence="3">Monomer.</text>
</comment>
<comment type="similarity">
    <text evidence="3">Belongs to the glutaredoxin family.</text>
</comment>
<evidence type="ECO:0000250" key="1"/>
<evidence type="ECO:0000255" key="2">
    <source>
        <dbReference type="PROSITE-ProRule" id="PRU00686"/>
    </source>
</evidence>
<evidence type="ECO:0000305" key="3"/>
<proteinExistence type="inferred from homology"/>
<feature type="initiator methionine" description="Removed" evidence="1">
    <location>
        <position position="1"/>
    </location>
</feature>
<feature type="chain" id="PRO_0000141589" description="Glutaredoxin 3">
    <location>
        <begin position="2"/>
        <end position="83"/>
    </location>
</feature>
<feature type="domain" description="Glutaredoxin" evidence="2">
    <location>
        <begin position="2"/>
        <end position="83"/>
    </location>
</feature>
<feature type="disulfide bond" description="Redox-active" evidence="1">
    <location>
        <begin position="12"/>
        <end position="15"/>
    </location>
</feature>
<keyword id="KW-0215">Deoxyribonucleotide synthesis</keyword>
<keyword id="KW-1015">Disulfide bond</keyword>
<keyword id="KW-0249">Electron transport</keyword>
<keyword id="KW-0676">Redox-active center</keyword>
<keyword id="KW-1185">Reference proteome</keyword>
<keyword id="KW-0813">Transport</keyword>
<name>GLRX3_ECO57</name>
<reference key="1">
    <citation type="journal article" date="2001" name="Nature">
        <title>Genome sequence of enterohaemorrhagic Escherichia coli O157:H7.</title>
        <authorList>
            <person name="Perna N.T."/>
            <person name="Plunkett G. III"/>
            <person name="Burland V."/>
            <person name="Mau B."/>
            <person name="Glasner J.D."/>
            <person name="Rose D.J."/>
            <person name="Mayhew G.F."/>
            <person name="Evans P.S."/>
            <person name="Gregor J."/>
            <person name="Kirkpatrick H.A."/>
            <person name="Posfai G."/>
            <person name="Hackett J."/>
            <person name="Klink S."/>
            <person name="Boutin A."/>
            <person name="Shao Y."/>
            <person name="Miller L."/>
            <person name="Grotbeck E.J."/>
            <person name="Davis N.W."/>
            <person name="Lim A."/>
            <person name="Dimalanta E.T."/>
            <person name="Potamousis K."/>
            <person name="Apodaca J."/>
            <person name="Anantharaman T.S."/>
            <person name="Lin J."/>
            <person name="Yen G."/>
            <person name="Schwartz D.C."/>
            <person name="Welch R.A."/>
            <person name="Blattner F.R."/>
        </authorList>
    </citation>
    <scope>NUCLEOTIDE SEQUENCE [LARGE SCALE GENOMIC DNA]</scope>
    <source>
        <strain>O157:H7 / EDL933 / ATCC 700927 / EHEC</strain>
    </source>
</reference>
<reference key="2">
    <citation type="journal article" date="2001" name="DNA Res.">
        <title>Complete genome sequence of enterohemorrhagic Escherichia coli O157:H7 and genomic comparison with a laboratory strain K-12.</title>
        <authorList>
            <person name="Hayashi T."/>
            <person name="Makino K."/>
            <person name="Ohnishi M."/>
            <person name="Kurokawa K."/>
            <person name="Ishii K."/>
            <person name="Yokoyama K."/>
            <person name="Han C.-G."/>
            <person name="Ohtsubo E."/>
            <person name="Nakayama K."/>
            <person name="Murata T."/>
            <person name="Tanaka M."/>
            <person name="Tobe T."/>
            <person name="Iida T."/>
            <person name="Takami H."/>
            <person name="Honda T."/>
            <person name="Sasakawa C."/>
            <person name="Ogasawara N."/>
            <person name="Yasunaga T."/>
            <person name="Kuhara S."/>
            <person name="Shiba T."/>
            <person name="Hattori M."/>
            <person name="Shinagawa H."/>
        </authorList>
    </citation>
    <scope>NUCLEOTIDE SEQUENCE [LARGE SCALE GENOMIC DNA]</scope>
    <source>
        <strain>O157:H7 / Sakai / RIMD 0509952 / EHEC</strain>
    </source>
</reference>
<gene>
    <name type="primary">grxC</name>
    <name type="ordered locus">Z5037</name>
    <name type="ordered locus">ECs4488</name>
</gene>
<sequence length="83" mass="9137">MANVEIYTKETCPYCHRAKALLSSKGVSFQELPIDGNAAKREEMIKRSGRTTVPQIFIDAQHIGGCDDLYALDARGGLDPLLK</sequence>